<reference key="1">
    <citation type="submission" date="1993-10" db="EMBL/GenBank/DDBJ databases">
        <title>Molecular cloning and characterization of protein kinase C from the sea urchin Lytechinus pictus.</title>
        <authorList>
            <person name="Rakow T.L."/>
            <person name="Shen S.S."/>
        </authorList>
    </citation>
    <scope>NUCLEOTIDE SEQUENCE [MRNA]</scope>
    <source>
        <tissue>Ovary</tissue>
    </source>
</reference>
<feature type="chain" id="PRO_0000055729" description="Protein kinase C">
    <location>
        <begin position="1"/>
        <end position="658"/>
    </location>
</feature>
<feature type="domain" description="C2" evidence="2">
    <location>
        <begin position="149"/>
        <end position="266"/>
    </location>
</feature>
<feature type="domain" description="Protein kinase" evidence="3">
    <location>
        <begin position="325"/>
        <end position="583"/>
    </location>
</feature>
<feature type="domain" description="AGC-kinase C-terminal" evidence="5">
    <location>
        <begin position="584"/>
        <end position="654"/>
    </location>
</feature>
<feature type="zinc finger region" description="Phorbol-ester/DAG-type 1" evidence="4">
    <location>
        <begin position="27"/>
        <end position="77"/>
    </location>
</feature>
<feature type="zinc finger region" description="Phorbol-ester/DAG-type 2" evidence="4">
    <location>
        <begin position="92"/>
        <end position="142"/>
    </location>
</feature>
<feature type="active site" description="Proton acceptor" evidence="3 6">
    <location>
        <position position="449"/>
    </location>
</feature>
<feature type="binding site" evidence="2">
    <location>
        <position position="178"/>
    </location>
    <ligand>
        <name>Ca(2+)</name>
        <dbReference type="ChEBI" id="CHEBI:29108"/>
        <label>1</label>
    </ligand>
</feature>
<feature type="binding site" evidence="2">
    <location>
        <position position="178"/>
    </location>
    <ligand>
        <name>Ca(2+)</name>
        <dbReference type="ChEBI" id="CHEBI:29108"/>
        <label>2</label>
    </ligand>
</feature>
<feature type="binding site" evidence="2">
    <location>
        <position position="184"/>
    </location>
    <ligand>
        <name>Ca(2+)</name>
        <dbReference type="ChEBI" id="CHEBI:29108"/>
        <label>1</label>
    </ligand>
</feature>
<feature type="binding site" evidence="2">
    <location>
        <position position="237"/>
    </location>
    <ligand>
        <name>Ca(2+)</name>
        <dbReference type="ChEBI" id="CHEBI:29108"/>
        <label>1</label>
    </ligand>
</feature>
<feature type="binding site" evidence="2">
    <location>
        <position position="237"/>
    </location>
    <ligand>
        <name>Ca(2+)</name>
        <dbReference type="ChEBI" id="CHEBI:29108"/>
        <label>2</label>
    </ligand>
</feature>
<feature type="binding site" evidence="2">
    <location>
        <position position="239"/>
    </location>
    <ligand>
        <name>Ca(2+)</name>
        <dbReference type="ChEBI" id="CHEBI:29108"/>
        <label>1</label>
    </ligand>
</feature>
<feature type="binding site" evidence="2">
    <location>
        <position position="239"/>
    </location>
    <ligand>
        <name>Ca(2+)</name>
        <dbReference type="ChEBI" id="CHEBI:29108"/>
        <label>2</label>
    </ligand>
</feature>
<feature type="binding site" evidence="2">
    <location>
        <position position="245"/>
    </location>
    <ligand>
        <name>Ca(2+)</name>
        <dbReference type="ChEBI" id="CHEBI:29108"/>
        <label>2</label>
    </ligand>
</feature>
<feature type="binding site" evidence="3">
    <location>
        <begin position="331"/>
        <end position="339"/>
    </location>
    <ligand>
        <name>ATP</name>
        <dbReference type="ChEBI" id="CHEBI:30616"/>
    </ligand>
</feature>
<feature type="binding site" evidence="3">
    <location>
        <position position="354"/>
    </location>
    <ligand>
        <name>ATP</name>
        <dbReference type="ChEBI" id="CHEBI:30616"/>
    </ligand>
</feature>
<accession>Q25378</accession>
<comment type="function">
    <text evidence="1">This is a calcium-activated, phospholipid-dependent, serine- and threonine-specific enzyme.</text>
</comment>
<comment type="function">
    <text evidence="1">PKC is activated by diacylglycerol which in turn phosphorylates a range of cellular proteins. PKC also serves as the receptor for phorbol esters, a class of tumor promoters (By similarity).</text>
</comment>
<comment type="catalytic activity">
    <reaction>
        <text>L-seryl-[protein] + ATP = O-phospho-L-seryl-[protein] + ADP + H(+)</text>
        <dbReference type="Rhea" id="RHEA:17989"/>
        <dbReference type="Rhea" id="RHEA-COMP:9863"/>
        <dbReference type="Rhea" id="RHEA-COMP:11604"/>
        <dbReference type="ChEBI" id="CHEBI:15378"/>
        <dbReference type="ChEBI" id="CHEBI:29999"/>
        <dbReference type="ChEBI" id="CHEBI:30616"/>
        <dbReference type="ChEBI" id="CHEBI:83421"/>
        <dbReference type="ChEBI" id="CHEBI:456216"/>
        <dbReference type="EC" id="2.7.11.13"/>
    </reaction>
</comment>
<comment type="catalytic activity">
    <reaction>
        <text>L-threonyl-[protein] + ATP = O-phospho-L-threonyl-[protein] + ADP + H(+)</text>
        <dbReference type="Rhea" id="RHEA:46608"/>
        <dbReference type="Rhea" id="RHEA-COMP:11060"/>
        <dbReference type="Rhea" id="RHEA-COMP:11605"/>
        <dbReference type="ChEBI" id="CHEBI:15378"/>
        <dbReference type="ChEBI" id="CHEBI:30013"/>
        <dbReference type="ChEBI" id="CHEBI:30616"/>
        <dbReference type="ChEBI" id="CHEBI:61977"/>
        <dbReference type="ChEBI" id="CHEBI:456216"/>
        <dbReference type="EC" id="2.7.11.13"/>
    </reaction>
</comment>
<comment type="cofactor">
    <cofactor evidence="2">
        <name>Ca(2+)</name>
        <dbReference type="ChEBI" id="CHEBI:29108"/>
    </cofactor>
</comment>
<comment type="similarity">
    <text evidence="7">Belongs to the protein kinase superfamily. AGC Ser/Thr protein kinase family. PKC subfamily.</text>
</comment>
<keyword id="KW-0067">ATP-binding</keyword>
<keyword id="KW-0106">Calcium</keyword>
<keyword id="KW-0418">Kinase</keyword>
<keyword id="KW-0479">Metal-binding</keyword>
<keyword id="KW-0547">Nucleotide-binding</keyword>
<keyword id="KW-0597">Phosphoprotein</keyword>
<keyword id="KW-0677">Repeat</keyword>
<keyword id="KW-0723">Serine/threonine-protein kinase</keyword>
<keyword id="KW-0808">Transferase</keyword>
<keyword id="KW-0862">Zinc</keyword>
<keyword id="KW-0863">Zinc-finger</keyword>
<proteinExistence type="evidence at transcript level"/>
<gene>
    <name type="primary">PKC1</name>
</gene>
<sequence>MSNSTLEMKGFARRGALRQKNVHEIKNHKFIPRFFKQPTFCSHCKDFIWGFGKQGFQCKVCSFVVHKRCHEFVTFQCPGLDPGVDSDDPRNKHKFKVHSYNSPTFCDHCGSLLYGLYHQGMKCGACDMNVHKRCQKSVPNLCGADHTERRGRIKVKAEVIGNKLQVTVAEAKNLIPMDPNGLSDPFVKLKLIPDQKRETKKKTRTIKGSLNPTWGESFDFNLEDTDRNRRLLVEVWDWDRATRNDFMGALSFGISELMKAGVDAWYKLLGQEEGEYYNVPAIAETESIDELTSNIKKLPMPTQEHVKPQNSNSMSGMGVVRASDFNFLSVLGKGSFGKVMLAEKKGTDELYAIKILKKDVIIQDDDVECTMTEKRVLGLPSKPAFLTALHSCFQTMDRLFFVMEFVNGGDLMFQIQKVGKFREPHAVFYAAEIAVGLFYLHSQGVIYRDLKLDNVLVDAEGHIKIADFGMCKEHMNEGDTTRTFCGTPDYIAPEIVAYQPYGKAVDWWAFGVLLYEMLAGQPPFDGEDEDELFQSIMEHVPSYPKSMSRESVTMCKGFLTKHPGKRLGSGPTGEQDIREHQFFRRIDWEKLANREIQPPFVPSVRNPRAAENFDPYFTKIPCALTPTDKLIIMNIQDEFQGFTFVNEVFDGYVRSLPS</sequence>
<dbReference type="EC" id="2.7.11.13"/>
<dbReference type="EMBL" id="U02967">
    <property type="protein sequence ID" value="AAA03447.1"/>
    <property type="molecule type" value="mRNA"/>
</dbReference>
<dbReference type="SMR" id="Q25378"/>
<dbReference type="OrthoDB" id="63267at2759"/>
<dbReference type="GO" id="GO:0005524">
    <property type="term" value="F:ATP binding"/>
    <property type="evidence" value="ECO:0007669"/>
    <property type="project" value="UniProtKB-KW"/>
</dbReference>
<dbReference type="GO" id="GO:0004697">
    <property type="term" value="F:diacylglycerol-dependent serine/threonine kinase activity"/>
    <property type="evidence" value="ECO:0007669"/>
    <property type="project" value="UniProtKB-EC"/>
</dbReference>
<dbReference type="GO" id="GO:0106310">
    <property type="term" value="F:protein serine kinase activity"/>
    <property type="evidence" value="ECO:0007669"/>
    <property type="project" value="RHEA"/>
</dbReference>
<dbReference type="GO" id="GO:0008270">
    <property type="term" value="F:zinc ion binding"/>
    <property type="evidence" value="ECO:0007669"/>
    <property type="project" value="UniProtKB-KW"/>
</dbReference>
<dbReference type="CDD" id="cd20833">
    <property type="entry name" value="C1_cPKC_rpt1"/>
    <property type="match status" value="1"/>
</dbReference>
<dbReference type="CDD" id="cd20836">
    <property type="entry name" value="C1_cPKC_rpt2"/>
    <property type="match status" value="1"/>
</dbReference>
<dbReference type="CDD" id="cd04026">
    <property type="entry name" value="C2_PKC_alpha_gamma"/>
    <property type="match status" value="1"/>
</dbReference>
<dbReference type="CDD" id="cd05587">
    <property type="entry name" value="STKc_cPKC"/>
    <property type="match status" value="1"/>
</dbReference>
<dbReference type="FunFam" id="2.60.40.150:FF:000012">
    <property type="entry name" value="Kinase C alpha type"/>
    <property type="match status" value="1"/>
</dbReference>
<dbReference type="FunFam" id="1.10.510.10:FF:000023">
    <property type="entry name" value="Protein kinase C"/>
    <property type="match status" value="1"/>
</dbReference>
<dbReference type="FunFam" id="3.30.200.20:FF:000080">
    <property type="entry name" value="Protein kinase C"/>
    <property type="match status" value="1"/>
</dbReference>
<dbReference type="FunFam" id="3.30.60.20:FF:000006">
    <property type="entry name" value="Protein kinase C"/>
    <property type="match status" value="1"/>
</dbReference>
<dbReference type="FunFam" id="3.30.60.20:FF:000052">
    <property type="entry name" value="Protein kinase C"/>
    <property type="match status" value="1"/>
</dbReference>
<dbReference type="Gene3D" id="3.30.60.20">
    <property type="match status" value="2"/>
</dbReference>
<dbReference type="Gene3D" id="2.60.40.150">
    <property type="entry name" value="C2 domain"/>
    <property type="match status" value="1"/>
</dbReference>
<dbReference type="Gene3D" id="3.30.200.20">
    <property type="entry name" value="Phosphorylase Kinase, domain 1"/>
    <property type="match status" value="1"/>
</dbReference>
<dbReference type="Gene3D" id="1.10.510.10">
    <property type="entry name" value="Transferase(Phosphotransferase) domain 1"/>
    <property type="match status" value="1"/>
</dbReference>
<dbReference type="InterPro" id="IPR000961">
    <property type="entry name" value="AGC-kinase_C"/>
</dbReference>
<dbReference type="InterPro" id="IPR046349">
    <property type="entry name" value="C1-like_sf"/>
</dbReference>
<dbReference type="InterPro" id="IPR000008">
    <property type="entry name" value="C2_dom"/>
</dbReference>
<dbReference type="InterPro" id="IPR035892">
    <property type="entry name" value="C2_domain_sf"/>
</dbReference>
<dbReference type="InterPro" id="IPR020454">
    <property type="entry name" value="DAG/PE-bd"/>
</dbReference>
<dbReference type="InterPro" id="IPR011009">
    <property type="entry name" value="Kinase-like_dom_sf"/>
</dbReference>
<dbReference type="InterPro" id="IPR002219">
    <property type="entry name" value="PE/DAG-bd"/>
</dbReference>
<dbReference type="InterPro" id="IPR017892">
    <property type="entry name" value="Pkinase_C"/>
</dbReference>
<dbReference type="InterPro" id="IPR000719">
    <property type="entry name" value="Prot_kinase_dom"/>
</dbReference>
<dbReference type="InterPro" id="IPR017441">
    <property type="entry name" value="Protein_kinase_ATP_BS"/>
</dbReference>
<dbReference type="InterPro" id="IPR014375">
    <property type="entry name" value="Protein_kinase_C_a/b/g"/>
</dbReference>
<dbReference type="InterPro" id="IPR008271">
    <property type="entry name" value="Ser/Thr_kinase_AS"/>
</dbReference>
<dbReference type="PANTHER" id="PTHR24351">
    <property type="entry name" value="RIBOSOMAL PROTEIN S6 KINASE"/>
    <property type="match status" value="1"/>
</dbReference>
<dbReference type="Pfam" id="PF00130">
    <property type="entry name" value="C1_1"/>
    <property type="match status" value="2"/>
</dbReference>
<dbReference type="Pfam" id="PF00168">
    <property type="entry name" value="C2"/>
    <property type="match status" value="1"/>
</dbReference>
<dbReference type="Pfam" id="PF00069">
    <property type="entry name" value="Pkinase"/>
    <property type="match status" value="1"/>
</dbReference>
<dbReference type="Pfam" id="PF00433">
    <property type="entry name" value="Pkinase_C"/>
    <property type="match status" value="1"/>
</dbReference>
<dbReference type="PIRSF" id="PIRSF000550">
    <property type="entry name" value="PKC_alpha"/>
    <property type="match status" value="1"/>
</dbReference>
<dbReference type="PRINTS" id="PR00360">
    <property type="entry name" value="C2DOMAIN"/>
</dbReference>
<dbReference type="PRINTS" id="PR00008">
    <property type="entry name" value="DAGPEDOMAIN"/>
</dbReference>
<dbReference type="SMART" id="SM00109">
    <property type="entry name" value="C1"/>
    <property type="match status" value="2"/>
</dbReference>
<dbReference type="SMART" id="SM00239">
    <property type="entry name" value="C2"/>
    <property type="match status" value="1"/>
</dbReference>
<dbReference type="SMART" id="SM00133">
    <property type="entry name" value="S_TK_X"/>
    <property type="match status" value="1"/>
</dbReference>
<dbReference type="SMART" id="SM00220">
    <property type="entry name" value="S_TKc"/>
    <property type="match status" value="1"/>
</dbReference>
<dbReference type="SUPFAM" id="SSF49562">
    <property type="entry name" value="C2 domain (Calcium/lipid-binding domain, CaLB)"/>
    <property type="match status" value="1"/>
</dbReference>
<dbReference type="SUPFAM" id="SSF57889">
    <property type="entry name" value="Cysteine-rich domain"/>
    <property type="match status" value="2"/>
</dbReference>
<dbReference type="SUPFAM" id="SSF56112">
    <property type="entry name" value="Protein kinase-like (PK-like)"/>
    <property type="match status" value="1"/>
</dbReference>
<dbReference type="PROSITE" id="PS51285">
    <property type="entry name" value="AGC_KINASE_CTER"/>
    <property type="match status" value="1"/>
</dbReference>
<dbReference type="PROSITE" id="PS50004">
    <property type="entry name" value="C2"/>
    <property type="match status" value="1"/>
</dbReference>
<dbReference type="PROSITE" id="PS00107">
    <property type="entry name" value="PROTEIN_KINASE_ATP"/>
    <property type="match status" value="1"/>
</dbReference>
<dbReference type="PROSITE" id="PS50011">
    <property type="entry name" value="PROTEIN_KINASE_DOM"/>
    <property type="match status" value="1"/>
</dbReference>
<dbReference type="PROSITE" id="PS00108">
    <property type="entry name" value="PROTEIN_KINASE_ST"/>
    <property type="match status" value="1"/>
</dbReference>
<dbReference type="PROSITE" id="PS00479">
    <property type="entry name" value="ZF_DAG_PE_1"/>
    <property type="match status" value="2"/>
</dbReference>
<dbReference type="PROSITE" id="PS50081">
    <property type="entry name" value="ZF_DAG_PE_2"/>
    <property type="match status" value="2"/>
</dbReference>
<name>KPC1_LYTPI</name>
<organism>
    <name type="scientific">Lytechinus pictus</name>
    <name type="common">Painted sea urchin</name>
    <dbReference type="NCBI Taxonomy" id="7653"/>
    <lineage>
        <taxon>Eukaryota</taxon>
        <taxon>Metazoa</taxon>
        <taxon>Echinodermata</taxon>
        <taxon>Eleutherozoa</taxon>
        <taxon>Echinozoa</taxon>
        <taxon>Echinoidea</taxon>
        <taxon>Euechinoidea</taxon>
        <taxon>Echinacea</taxon>
        <taxon>Temnopleuroida</taxon>
        <taxon>Toxopneustidae</taxon>
        <taxon>Lytechinus</taxon>
    </lineage>
</organism>
<evidence type="ECO:0000250" key="1"/>
<evidence type="ECO:0000255" key="2">
    <source>
        <dbReference type="PROSITE-ProRule" id="PRU00041"/>
    </source>
</evidence>
<evidence type="ECO:0000255" key="3">
    <source>
        <dbReference type="PROSITE-ProRule" id="PRU00159"/>
    </source>
</evidence>
<evidence type="ECO:0000255" key="4">
    <source>
        <dbReference type="PROSITE-ProRule" id="PRU00226"/>
    </source>
</evidence>
<evidence type="ECO:0000255" key="5">
    <source>
        <dbReference type="PROSITE-ProRule" id="PRU00618"/>
    </source>
</evidence>
<evidence type="ECO:0000255" key="6">
    <source>
        <dbReference type="PROSITE-ProRule" id="PRU10027"/>
    </source>
</evidence>
<evidence type="ECO:0000305" key="7"/>
<protein>
    <recommendedName>
        <fullName>Protein kinase C</fullName>
        <ecNumber>2.7.11.13</ecNumber>
    </recommendedName>
</protein>